<evidence type="ECO:0000255" key="1">
    <source>
        <dbReference type="PROSITE-ProRule" id="PRU00042"/>
    </source>
</evidence>
<evidence type="ECO:0000255" key="2">
    <source>
        <dbReference type="PROSITE-ProRule" id="PRU00978"/>
    </source>
</evidence>
<evidence type="ECO:0000256" key="3">
    <source>
        <dbReference type="SAM" id="MobiDB-lite"/>
    </source>
</evidence>
<evidence type="ECO:0000269" key="4">
    <source>
    </source>
</evidence>
<evidence type="ECO:0000269" key="5">
    <source>
    </source>
</evidence>
<evidence type="ECO:0000303" key="6">
    <source>
    </source>
</evidence>
<evidence type="ECO:0000303" key="7">
    <source>
    </source>
</evidence>
<evidence type="ECO:0000303" key="8">
    <source>
    </source>
</evidence>
<evidence type="ECO:0000305" key="9"/>
<evidence type="ECO:0007744" key="10">
    <source>
    </source>
</evidence>
<evidence type="ECO:0007744" key="11">
    <source>
    </source>
</evidence>
<sequence length="508" mass="56918">MIYEESKMNLEQERPFVCSAPGCSQRFPTEDHLMIHRHKHEMTLKFPSIKTDNMLSDQTPTPTRFLKNCEEVGLFSELDCSLEHEFRKAQEEESSKRNISMHNAVGGAMTGPGTHQLSSARLPNHDTNVVIQQAMPSPQSSSVITQAPSTNRQIGPVPGSLSSLLHLHNRQRQPMPASMPGTLPNPTMPGSSAVLMPMERQMSVNSSIMGMQGPNLSNPCASPQVQPMHSEAKMRLKAALTHHPAAMSNGNMNTMGHMMEMMGSRQDQTPHHHMHSHPHQHQTLPPHHPYPHQHQHPAHHPHPQPHHQQNHPHHHSHSHLHAHPAHHQTSPHPPLHTGNQAQVSPATQQMQPTQTIQPPQPTGGRRRRVVDEDPDERRRKFLERNRAAATRCRQKRKVWVMSLEKKAEELTQTNMQLQNEVSMLKNEVAQLKQLLLTHKDCPITAMQKESQGYLSPESSPPASPVPACSQQQVIQHNTITTSSSVSEVVGSSTLSQLTTHRTDLNPIL</sequence>
<reference key="1">
    <citation type="journal article" date="1993" name="J. Biol. Chem.">
        <title>Isolation and characterization of a novel member of the gene family encoding the cAMP response element-binding protein CRE-BP1.</title>
        <authorList>
            <person name="Nomura N."/>
            <person name="Zu Y.-L."/>
            <person name="Maekawa T."/>
            <person name="Tabata S."/>
            <person name="Akiyama T."/>
            <person name="Ishii S."/>
        </authorList>
    </citation>
    <scope>NUCLEOTIDE SEQUENCE [MRNA] (ISOFORM 1)</scope>
    <scope>SUBUNIT</scope>
</reference>
<reference key="2">
    <citation type="journal article" date="1993" name="Oncogene">
        <title>Regulation of trans-activating capacity of CRE-BPa by phorbol ester tumor promoter TPA.</title>
        <authorList>
            <person name="Zu Y.-L."/>
            <person name="Maekawa T."/>
            <person name="Nomura N."/>
            <person name="Nakata T."/>
            <person name="Ishii S."/>
        </authorList>
    </citation>
    <scope>NUCLEOTIDE SEQUENCE [MRNA] (ISOFORMS 2; 3 AND 4)</scope>
    <scope>FUNCTION</scope>
</reference>
<reference key="3">
    <citation type="journal article" date="2004" name="Nat. Genet.">
        <title>Complete sequencing and characterization of 21,243 full-length human cDNAs.</title>
        <authorList>
            <person name="Ota T."/>
            <person name="Suzuki Y."/>
            <person name="Nishikawa T."/>
            <person name="Otsuki T."/>
            <person name="Sugiyama T."/>
            <person name="Irie R."/>
            <person name="Wakamatsu A."/>
            <person name="Hayashi K."/>
            <person name="Sato H."/>
            <person name="Nagai K."/>
            <person name="Kimura K."/>
            <person name="Makita H."/>
            <person name="Sekine M."/>
            <person name="Obayashi M."/>
            <person name="Nishi T."/>
            <person name="Shibahara T."/>
            <person name="Tanaka T."/>
            <person name="Ishii S."/>
            <person name="Yamamoto J."/>
            <person name="Saito K."/>
            <person name="Kawai Y."/>
            <person name="Isono Y."/>
            <person name="Nakamura Y."/>
            <person name="Nagahari K."/>
            <person name="Murakami K."/>
            <person name="Yasuda T."/>
            <person name="Iwayanagi T."/>
            <person name="Wagatsuma M."/>
            <person name="Shiratori A."/>
            <person name="Sudo H."/>
            <person name="Hosoiri T."/>
            <person name="Kaku Y."/>
            <person name="Kodaira H."/>
            <person name="Kondo H."/>
            <person name="Sugawara M."/>
            <person name="Takahashi M."/>
            <person name="Kanda K."/>
            <person name="Yokoi T."/>
            <person name="Furuya T."/>
            <person name="Kikkawa E."/>
            <person name="Omura Y."/>
            <person name="Abe K."/>
            <person name="Kamihara K."/>
            <person name="Katsuta N."/>
            <person name="Sato K."/>
            <person name="Tanikawa M."/>
            <person name="Yamazaki M."/>
            <person name="Ninomiya K."/>
            <person name="Ishibashi T."/>
            <person name="Yamashita H."/>
            <person name="Murakawa K."/>
            <person name="Fujimori K."/>
            <person name="Tanai H."/>
            <person name="Kimata M."/>
            <person name="Watanabe M."/>
            <person name="Hiraoka S."/>
            <person name="Chiba Y."/>
            <person name="Ishida S."/>
            <person name="Ono Y."/>
            <person name="Takiguchi S."/>
            <person name="Watanabe S."/>
            <person name="Yosida M."/>
            <person name="Hotuta T."/>
            <person name="Kusano J."/>
            <person name="Kanehori K."/>
            <person name="Takahashi-Fujii A."/>
            <person name="Hara H."/>
            <person name="Tanase T.-O."/>
            <person name="Nomura Y."/>
            <person name="Togiya S."/>
            <person name="Komai F."/>
            <person name="Hara R."/>
            <person name="Takeuchi K."/>
            <person name="Arita M."/>
            <person name="Imose N."/>
            <person name="Musashino K."/>
            <person name="Yuuki H."/>
            <person name="Oshima A."/>
            <person name="Sasaki N."/>
            <person name="Aotsuka S."/>
            <person name="Yoshikawa Y."/>
            <person name="Matsunawa H."/>
            <person name="Ichihara T."/>
            <person name="Shiohata N."/>
            <person name="Sano S."/>
            <person name="Moriya S."/>
            <person name="Momiyama H."/>
            <person name="Satoh N."/>
            <person name="Takami S."/>
            <person name="Terashima Y."/>
            <person name="Suzuki O."/>
            <person name="Nakagawa S."/>
            <person name="Senoh A."/>
            <person name="Mizoguchi H."/>
            <person name="Goto Y."/>
            <person name="Shimizu F."/>
            <person name="Wakebe H."/>
            <person name="Hishigaki H."/>
            <person name="Watanabe T."/>
            <person name="Sugiyama A."/>
            <person name="Takemoto M."/>
            <person name="Kawakami B."/>
            <person name="Yamazaki M."/>
            <person name="Watanabe K."/>
            <person name="Kumagai A."/>
            <person name="Itakura S."/>
            <person name="Fukuzumi Y."/>
            <person name="Fujimori Y."/>
            <person name="Komiyama M."/>
            <person name="Tashiro H."/>
            <person name="Tanigami A."/>
            <person name="Fujiwara T."/>
            <person name="Ono T."/>
            <person name="Yamada K."/>
            <person name="Fujii Y."/>
            <person name="Ozaki K."/>
            <person name="Hirao M."/>
            <person name="Ohmori Y."/>
            <person name="Kawabata A."/>
            <person name="Hikiji T."/>
            <person name="Kobatake N."/>
            <person name="Inagaki H."/>
            <person name="Ikema Y."/>
            <person name="Okamoto S."/>
            <person name="Okitani R."/>
            <person name="Kawakami T."/>
            <person name="Noguchi S."/>
            <person name="Itoh T."/>
            <person name="Shigeta K."/>
            <person name="Senba T."/>
            <person name="Matsumura K."/>
            <person name="Nakajima Y."/>
            <person name="Mizuno T."/>
            <person name="Morinaga M."/>
            <person name="Sasaki M."/>
            <person name="Togashi T."/>
            <person name="Oyama M."/>
            <person name="Hata H."/>
            <person name="Watanabe M."/>
            <person name="Komatsu T."/>
            <person name="Mizushima-Sugano J."/>
            <person name="Satoh T."/>
            <person name="Shirai Y."/>
            <person name="Takahashi Y."/>
            <person name="Nakagawa K."/>
            <person name="Okumura K."/>
            <person name="Nagase T."/>
            <person name="Nomura N."/>
            <person name="Kikuchi H."/>
            <person name="Masuho Y."/>
            <person name="Yamashita R."/>
            <person name="Nakai K."/>
            <person name="Yada T."/>
            <person name="Nakamura Y."/>
            <person name="Ohara O."/>
            <person name="Isogai T."/>
            <person name="Sugano S."/>
        </authorList>
    </citation>
    <scope>NUCLEOTIDE SEQUENCE [LARGE SCALE MRNA] (ISOFORMS 3 AND 4)</scope>
    <source>
        <tissue>Embryo</tissue>
        <tissue>Placenta</tissue>
        <tissue>Trachea</tissue>
    </source>
</reference>
<reference key="4">
    <citation type="journal article" date="2008" name="Nat. Methods">
        <title>Human protein factory for converting the transcriptome into an in vitro-expressed proteome.</title>
        <authorList>
            <person name="Goshima N."/>
            <person name="Kawamura Y."/>
            <person name="Fukumoto A."/>
            <person name="Miura A."/>
            <person name="Honma R."/>
            <person name="Satoh R."/>
            <person name="Wakamatsu A."/>
            <person name="Yamamoto J."/>
            <person name="Kimura K."/>
            <person name="Nishikawa T."/>
            <person name="Andoh T."/>
            <person name="Iida Y."/>
            <person name="Ishikawa K."/>
            <person name="Ito E."/>
            <person name="Kagawa N."/>
            <person name="Kaminaga C."/>
            <person name="Kanehori K."/>
            <person name="Kawakami B."/>
            <person name="Kenmochi K."/>
            <person name="Kimura R."/>
            <person name="Kobayashi M."/>
            <person name="Kuroita T."/>
            <person name="Kuwayama H."/>
            <person name="Maruyama Y."/>
            <person name="Matsuo K."/>
            <person name="Minami K."/>
            <person name="Mitsubori M."/>
            <person name="Mori M."/>
            <person name="Morishita R."/>
            <person name="Murase A."/>
            <person name="Nishikawa A."/>
            <person name="Nishikawa S."/>
            <person name="Okamoto T."/>
            <person name="Sakagami N."/>
            <person name="Sakamoto Y."/>
            <person name="Sasaki Y."/>
            <person name="Seki T."/>
            <person name="Sono S."/>
            <person name="Sugiyama A."/>
            <person name="Sumiya T."/>
            <person name="Takayama T."/>
            <person name="Takayama Y."/>
            <person name="Takeda H."/>
            <person name="Togashi T."/>
            <person name="Yahata K."/>
            <person name="Yamada H."/>
            <person name="Yanagisawa Y."/>
            <person name="Endo Y."/>
            <person name="Imamoto F."/>
            <person name="Kisu Y."/>
            <person name="Tanaka S."/>
            <person name="Isogai T."/>
            <person name="Imai J."/>
            <person name="Watanabe S."/>
            <person name="Nomura N."/>
        </authorList>
    </citation>
    <scope>NUCLEOTIDE SEQUENCE [LARGE SCALE MRNA] (ISOFORM 1)</scope>
</reference>
<reference key="5">
    <citation type="journal article" date="2003" name="Nature">
        <title>The DNA sequence of human chromosome 7.</title>
        <authorList>
            <person name="Hillier L.W."/>
            <person name="Fulton R.S."/>
            <person name="Fulton L.A."/>
            <person name="Graves T.A."/>
            <person name="Pepin K.H."/>
            <person name="Wagner-McPherson C."/>
            <person name="Layman D."/>
            <person name="Maas J."/>
            <person name="Jaeger S."/>
            <person name="Walker R."/>
            <person name="Wylie K."/>
            <person name="Sekhon M."/>
            <person name="Becker M.C."/>
            <person name="O'Laughlin M.D."/>
            <person name="Schaller M.E."/>
            <person name="Fewell G.A."/>
            <person name="Delehaunty K.D."/>
            <person name="Miner T.L."/>
            <person name="Nash W.E."/>
            <person name="Cordes M."/>
            <person name="Du H."/>
            <person name="Sun H."/>
            <person name="Edwards J."/>
            <person name="Bradshaw-Cordum H."/>
            <person name="Ali J."/>
            <person name="Andrews S."/>
            <person name="Isak A."/>
            <person name="Vanbrunt A."/>
            <person name="Nguyen C."/>
            <person name="Du F."/>
            <person name="Lamar B."/>
            <person name="Courtney L."/>
            <person name="Kalicki J."/>
            <person name="Ozersky P."/>
            <person name="Bielicki L."/>
            <person name="Scott K."/>
            <person name="Holmes A."/>
            <person name="Harkins R."/>
            <person name="Harris A."/>
            <person name="Strong C.M."/>
            <person name="Hou S."/>
            <person name="Tomlinson C."/>
            <person name="Dauphin-Kohlberg S."/>
            <person name="Kozlowicz-Reilly A."/>
            <person name="Leonard S."/>
            <person name="Rohlfing T."/>
            <person name="Rock S.M."/>
            <person name="Tin-Wollam A.-M."/>
            <person name="Abbott A."/>
            <person name="Minx P."/>
            <person name="Maupin R."/>
            <person name="Strowmatt C."/>
            <person name="Latreille P."/>
            <person name="Miller N."/>
            <person name="Johnson D."/>
            <person name="Murray J."/>
            <person name="Woessner J.P."/>
            <person name="Wendl M.C."/>
            <person name="Yang S.-P."/>
            <person name="Schultz B.R."/>
            <person name="Wallis J.W."/>
            <person name="Spieth J."/>
            <person name="Bieri T.A."/>
            <person name="Nelson J.O."/>
            <person name="Berkowicz N."/>
            <person name="Wohldmann P.E."/>
            <person name="Cook L.L."/>
            <person name="Hickenbotham M.T."/>
            <person name="Eldred J."/>
            <person name="Williams D."/>
            <person name="Bedell J.A."/>
            <person name="Mardis E.R."/>
            <person name="Clifton S.W."/>
            <person name="Chissoe S.L."/>
            <person name="Marra M.A."/>
            <person name="Raymond C."/>
            <person name="Haugen E."/>
            <person name="Gillett W."/>
            <person name="Zhou Y."/>
            <person name="James R."/>
            <person name="Phelps K."/>
            <person name="Iadanoto S."/>
            <person name="Bubb K."/>
            <person name="Simms E."/>
            <person name="Levy R."/>
            <person name="Clendenning J."/>
            <person name="Kaul R."/>
            <person name="Kent W.J."/>
            <person name="Furey T.S."/>
            <person name="Baertsch R.A."/>
            <person name="Brent M.R."/>
            <person name="Keibler E."/>
            <person name="Flicek P."/>
            <person name="Bork P."/>
            <person name="Suyama M."/>
            <person name="Bailey J.A."/>
            <person name="Portnoy M.E."/>
            <person name="Torrents D."/>
            <person name="Chinwalla A.T."/>
            <person name="Gish W.R."/>
            <person name="Eddy S.R."/>
            <person name="McPherson J.D."/>
            <person name="Olson M.V."/>
            <person name="Eichler E.E."/>
            <person name="Green E.D."/>
            <person name="Waterston R.H."/>
            <person name="Wilson R.K."/>
        </authorList>
    </citation>
    <scope>NUCLEOTIDE SEQUENCE [LARGE SCALE GENOMIC DNA]</scope>
</reference>
<reference key="6">
    <citation type="submission" date="2005-07" db="EMBL/GenBank/DDBJ databases">
        <authorList>
            <person name="Mural R.J."/>
            <person name="Istrail S."/>
            <person name="Sutton G.G."/>
            <person name="Florea L."/>
            <person name="Halpern A.L."/>
            <person name="Mobarry C.M."/>
            <person name="Lippert R."/>
            <person name="Walenz B."/>
            <person name="Shatkay H."/>
            <person name="Dew I."/>
            <person name="Miller J.R."/>
            <person name="Flanigan M.J."/>
            <person name="Edwards N.J."/>
            <person name="Bolanos R."/>
            <person name="Fasulo D."/>
            <person name="Halldorsson B.V."/>
            <person name="Hannenhalli S."/>
            <person name="Turner R."/>
            <person name="Yooseph S."/>
            <person name="Lu F."/>
            <person name="Nusskern D.R."/>
            <person name="Shue B.C."/>
            <person name="Zheng X.H."/>
            <person name="Zhong F."/>
            <person name="Delcher A.L."/>
            <person name="Huson D.H."/>
            <person name="Kravitz S.A."/>
            <person name="Mouchard L."/>
            <person name="Reinert K."/>
            <person name="Remington K.A."/>
            <person name="Clark A.G."/>
            <person name="Waterman M.S."/>
            <person name="Eichler E.E."/>
            <person name="Adams M.D."/>
            <person name="Hunkapiller M.W."/>
            <person name="Myers E.W."/>
            <person name="Venter J.C."/>
        </authorList>
    </citation>
    <scope>NUCLEOTIDE SEQUENCE [LARGE SCALE GENOMIC DNA]</scope>
</reference>
<reference key="7">
    <citation type="journal article" date="2004" name="Genome Res.">
        <title>The status, quality, and expansion of the NIH full-length cDNA project: the Mammalian Gene Collection (MGC).</title>
        <authorList>
            <consortium name="The MGC Project Team"/>
        </authorList>
    </citation>
    <scope>NUCLEOTIDE SEQUENCE [LARGE SCALE MRNA] (ISOFORM 4)</scope>
    <source>
        <tissue>Placenta</tissue>
    </source>
</reference>
<reference key="8">
    <citation type="journal article" date="2010" name="Sci. Signal.">
        <title>Quantitative phosphoproteomics reveals widespread full phosphorylation site occupancy during mitosis.</title>
        <authorList>
            <person name="Olsen J.V."/>
            <person name="Vermeulen M."/>
            <person name="Santamaria A."/>
            <person name="Kumar C."/>
            <person name="Miller M.L."/>
            <person name="Jensen L.J."/>
            <person name="Gnad F."/>
            <person name="Cox J."/>
            <person name="Jensen T.S."/>
            <person name="Nigg E.A."/>
            <person name="Brunak S."/>
            <person name="Mann M."/>
        </authorList>
    </citation>
    <scope>PHOSPHORYLATION [LARGE SCALE ANALYSIS] AT THR-59; THR-61 AND SER-137</scope>
    <scope>IDENTIFICATION BY MASS SPECTROMETRY [LARGE SCALE ANALYSIS]</scope>
    <source>
        <tissue>Cervix carcinoma</tissue>
    </source>
</reference>
<reference key="9">
    <citation type="journal article" date="2017" name="Nat. Struct. Mol. Biol.">
        <title>Site-specific mapping of the human SUMO proteome reveals co-modification with phosphorylation.</title>
        <authorList>
            <person name="Hendriks I.A."/>
            <person name="Lyon D."/>
            <person name="Young C."/>
            <person name="Jensen L.J."/>
            <person name="Vertegaal A.C."/>
            <person name="Nielsen M.L."/>
        </authorList>
    </citation>
    <scope>SUMOYLATION [LARGE SCALE ANALYSIS] AT LYS-50</scope>
    <scope>IDENTIFICATION BY MASS SPECTROMETRY [LARGE SCALE ANALYSIS]</scope>
</reference>
<dbReference type="EMBL" id="L05515">
    <property type="protein sequence ID" value="AAA52072.1"/>
    <property type="molecule type" value="mRNA"/>
</dbReference>
<dbReference type="EMBL" id="L05911">
    <property type="protein sequence ID" value="AAC37525.1"/>
    <property type="molecule type" value="mRNA"/>
</dbReference>
<dbReference type="EMBL" id="L05912">
    <property type="protein sequence ID" value="AAC37527.1"/>
    <property type="molecule type" value="mRNA"/>
</dbReference>
<dbReference type="EMBL" id="L05913">
    <property type="protein sequence ID" value="AAC37526.1"/>
    <property type="molecule type" value="mRNA"/>
</dbReference>
<dbReference type="EMBL" id="AK292916">
    <property type="protein sequence ID" value="BAF85605.1"/>
    <property type="molecule type" value="mRNA"/>
</dbReference>
<dbReference type="EMBL" id="AK300455">
    <property type="protein sequence ID" value="BAG62175.1"/>
    <property type="molecule type" value="mRNA"/>
</dbReference>
<dbReference type="EMBL" id="AK316187">
    <property type="protein sequence ID" value="BAH14558.1"/>
    <property type="molecule type" value="mRNA"/>
</dbReference>
<dbReference type="EMBL" id="AB451409">
    <property type="protein sequence ID" value="BAG70223.1"/>
    <property type="molecule type" value="mRNA"/>
</dbReference>
<dbReference type="EMBL" id="AC003074">
    <property type="protein sequence ID" value="AAS00387.1"/>
    <property type="molecule type" value="Genomic_DNA"/>
</dbReference>
<dbReference type="EMBL" id="AC005105">
    <property type="protein sequence ID" value="AAP22329.1"/>
    <property type="molecule type" value="Genomic_DNA"/>
</dbReference>
<dbReference type="EMBL" id="AC005013">
    <property type="status" value="NOT_ANNOTATED_CDS"/>
    <property type="molecule type" value="Genomic_DNA"/>
</dbReference>
<dbReference type="EMBL" id="AC006331">
    <property type="status" value="NOT_ANNOTATED_CDS"/>
    <property type="molecule type" value="Genomic_DNA"/>
</dbReference>
<dbReference type="EMBL" id="AC006367">
    <property type="status" value="NOT_ANNOTATED_CDS"/>
    <property type="molecule type" value="Genomic_DNA"/>
</dbReference>
<dbReference type="EMBL" id="AC006980">
    <property type="status" value="NOT_ANNOTATED_CDS"/>
    <property type="molecule type" value="Genomic_DNA"/>
</dbReference>
<dbReference type="EMBL" id="CH471073">
    <property type="protein sequence ID" value="EAW93908.1"/>
    <property type="molecule type" value="Genomic_DNA"/>
</dbReference>
<dbReference type="EMBL" id="CH471073">
    <property type="protein sequence ID" value="EAW93910.1"/>
    <property type="molecule type" value="Genomic_DNA"/>
</dbReference>
<dbReference type="EMBL" id="BC059400">
    <property type="protein sequence ID" value="AAH59400.2"/>
    <property type="molecule type" value="mRNA"/>
</dbReference>
<dbReference type="CCDS" id="CCDS43562.1">
    <molecule id="Q02930-3"/>
</dbReference>
<dbReference type="CCDS" id="CCDS43563.1">
    <molecule id="Q02930-4"/>
</dbReference>
<dbReference type="CCDS" id="CCDS5417.1">
    <molecule id="Q02930-1"/>
</dbReference>
<dbReference type="CCDS" id="CCDS5418.1">
    <molecule id="Q02930-2"/>
</dbReference>
<dbReference type="PIR" id="A45477">
    <property type="entry name" value="A45477"/>
</dbReference>
<dbReference type="PIR" id="I78877">
    <property type="entry name" value="I78877"/>
</dbReference>
<dbReference type="RefSeq" id="NP_001011666.1">
    <molecule id="Q02930-4"/>
    <property type="nucleotide sequence ID" value="NM_001011666.3"/>
</dbReference>
<dbReference type="RefSeq" id="NP_004895.2">
    <molecule id="Q02930-2"/>
    <property type="nucleotide sequence ID" value="NM_004904.4"/>
</dbReference>
<dbReference type="RefSeq" id="NP_878901.2">
    <molecule id="Q02930-1"/>
    <property type="nucleotide sequence ID" value="NM_182898.4"/>
</dbReference>
<dbReference type="RefSeq" id="NP_878902.2">
    <molecule id="Q02930-3"/>
    <property type="nucleotide sequence ID" value="NM_182899.5"/>
</dbReference>
<dbReference type="RefSeq" id="XP_005249963.1">
    <molecule id="Q02930-2"/>
    <property type="nucleotide sequence ID" value="XM_005249906.2"/>
</dbReference>
<dbReference type="RefSeq" id="XP_016868295.1">
    <molecule id="Q02930-2"/>
    <property type="nucleotide sequence ID" value="XM_017012806.2"/>
</dbReference>
<dbReference type="RefSeq" id="XP_016868297.1">
    <molecule id="Q02930-1"/>
    <property type="nucleotide sequence ID" value="XM_017012808.2"/>
</dbReference>
<dbReference type="RefSeq" id="XP_024302773.1">
    <molecule id="Q02930-3"/>
    <property type="nucleotide sequence ID" value="XM_024447005.2"/>
</dbReference>
<dbReference type="RefSeq" id="XP_047277023.1">
    <molecule id="Q02930-2"/>
    <property type="nucleotide sequence ID" value="XM_047421067.1"/>
</dbReference>
<dbReference type="RefSeq" id="XP_054215372.1">
    <molecule id="Q02930-2"/>
    <property type="nucleotide sequence ID" value="XM_054359397.1"/>
</dbReference>
<dbReference type="RefSeq" id="XP_054215373.1">
    <molecule id="Q02930-2"/>
    <property type="nucleotide sequence ID" value="XM_054359398.1"/>
</dbReference>
<dbReference type="RefSeq" id="XP_054215375.1">
    <molecule id="Q02930-3"/>
    <property type="nucleotide sequence ID" value="XM_054359400.1"/>
</dbReference>
<dbReference type="SMR" id="Q02930"/>
<dbReference type="BioGRID" id="114954">
    <property type="interactions" value="164"/>
</dbReference>
<dbReference type="FunCoup" id="Q02930">
    <property type="interactions" value="2036"/>
</dbReference>
<dbReference type="IntAct" id="Q02930">
    <property type="interactions" value="144"/>
</dbReference>
<dbReference type="MINT" id="Q02930"/>
<dbReference type="STRING" id="9606.ENSP00000350359"/>
<dbReference type="GlyGen" id="Q02930">
    <property type="glycosylation" value="2 sites, 1 O-linked glycan (1 site)"/>
</dbReference>
<dbReference type="iPTMnet" id="Q02930"/>
<dbReference type="PhosphoSitePlus" id="Q02930"/>
<dbReference type="BioMuta" id="CREB5"/>
<dbReference type="DMDM" id="334302918"/>
<dbReference type="jPOST" id="Q02930"/>
<dbReference type="MassIVE" id="Q02930"/>
<dbReference type="PaxDb" id="9606-ENSP00000350359"/>
<dbReference type="PeptideAtlas" id="Q02930"/>
<dbReference type="ProteomicsDB" id="58137">
    <molecule id="Q02930-1"/>
</dbReference>
<dbReference type="ProteomicsDB" id="58138">
    <molecule id="Q02930-2"/>
</dbReference>
<dbReference type="ProteomicsDB" id="58139">
    <molecule id="Q02930-3"/>
</dbReference>
<dbReference type="ProteomicsDB" id="58140">
    <molecule id="Q02930-4"/>
</dbReference>
<dbReference type="Pumba" id="Q02930"/>
<dbReference type="Antibodypedia" id="12490">
    <property type="antibodies" value="220 antibodies from 26 providers"/>
</dbReference>
<dbReference type="DNASU" id="9586"/>
<dbReference type="Ensembl" id="ENST00000357727.7">
    <molecule id="Q02930-1"/>
    <property type="protein sequence ID" value="ENSP00000350359.2"/>
    <property type="gene ID" value="ENSG00000146592.17"/>
</dbReference>
<dbReference type="Ensembl" id="ENST00000396298.6">
    <molecule id="Q02930-4"/>
    <property type="protein sequence ID" value="ENSP00000379592.2"/>
    <property type="gene ID" value="ENSG00000146592.17"/>
</dbReference>
<dbReference type="Ensembl" id="ENST00000396299.6">
    <molecule id="Q02930-3"/>
    <property type="protein sequence ID" value="ENSP00000379593.2"/>
    <property type="gene ID" value="ENSG00000146592.17"/>
</dbReference>
<dbReference type="Ensembl" id="ENST00000396300.6">
    <molecule id="Q02930-2"/>
    <property type="protein sequence ID" value="ENSP00000379594.2"/>
    <property type="gene ID" value="ENSG00000146592.17"/>
</dbReference>
<dbReference type="Ensembl" id="ENST00000409603.5">
    <molecule id="Q02930-3"/>
    <property type="protein sequence ID" value="ENSP00000387197.1"/>
    <property type="gene ID" value="ENSG00000146592.17"/>
</dbReference>
<dbReference type="GeneID" id="9586"/>
<dbReference type="KEGG" id="hsa:9586"/>
<dbReference type="MANE-Select" id="ENST00000357727.7">
    <property type="protein sequence ID" value="ENSP00000350359.2"/>
    <property type="RefSeq nucleotide sequence ID" value="NM_182898.4"/>
    <property type="RefSeq protein sequence ID" value="NP_878901.2"/>
</dbReference>
<dbReference type="UCSC" id="uc003szo.4">
    <molecule id="Q02930-1"/>
    <property type="organism name" value="human"/>
</dbReference>
<dbReference type="AGR" id="HGNC:16844"/>
<dbReference type="CTD" id="9586"/>
<dbReference type="DisGeNET" id="9586"/>
<dbReference type="GeneCards" id="CREB5"/>
<dbReference type="HGNC" id="HGNC:16844">
    <property type="gene designation" value="CREB5"/>
</dbReference>
<dbReference type="HPA" id="ENSG00000146592">
    <property type="expression patterns" value="Low tissue specificity"/>
</dbReference>
<dbReference type="MIM" id="618262">
    <property type="type" value="gene"/>
</dbReference>
<dbReference type="neXtProt" id="NX_Q02930"/>
<dbReference type="OpenTargets" id="ENSG00000146592"/>
<dbReference type="PharmGKB" id="PA134930491"/>
<dbReference type="VEuPathDB" id="HostDB:ENSG00000146592"/>
<dbReference type="eggNOG" id="KOG1414">
    <property type="taxonomic scope" value="Eukaryota"/>
</dbReference>
<dbReference type="GeneTree" id="ENSGT00940000156420"/>
<dbReference type="HOGENOM" id="CLU_021564_0_0_1"/>
<dbReference type="InParanoid" id="Q02930"/>
<dbReference type="OMA" id="HHTDINP"/>
<dbReference type="OrthoDB" id="295274at2759"/>
<dbReference type="PAN-GO" id="Q02930">
    <property type="GO annotations" value="3 GO annotations based on evolutionary models"/>
</dbReference>
<dbReference type="PhylomeDB" id="Q02930"/>
<dbReference type="PathwayCommons" id="Q02930"/>
<dbReference type="SignaLink" id="Q02930"/>
<dbReference type="SIGNOR" id="Q02930"/>
<dbReference type="BioGRID-ORCS" id="9586">
    <property type="hits" value="24 hits in 1198 CRISPR screens"/>
</dbReference>
<dbReference type="ChiTaRS" id="CREB5">
    <property type="organism name" value="human"/>
</dbReference>
<dbReference type="GeneWiki" id="CREB5"/>
<dbReference type="GenomeRNAi" id="9586"/>
<dbReference type="Pharos" id="Q02930">
    <property type="development level" value="Tbio"/>
</dbReference>
<dbReference type="PRO" id="PR:Q02930"/>
<dbReference type="Proteomes" id="UP000005640">
    <property type="component" value="Chromosome 7"/>
</dbReference>
<dbReference type="RNAct" id="Q02930">
    <property type="molecule type" value="protein"/>
</dbReference>
<dbReference type="Bgee" id="ENSG00000146592">
    <property type="expression patterns" value="Expressed in synovial joint and 179 other cell types or tissues"/>
</dbReference>
<dbReference type="ExpressionAtlas" id="Q02930">
    <property type="expression patterns" value="baseline and differential"/>
</dbReference>
<dbReference type="GO" id="GO:0000785">
    <property type="term" value="C:chromatin"/>
    <property type="evidence" value="ECO:0000247"/>
    <property type="project" value="NTNU_SB"/>
</dbReference>
<dbReference type="GO" id="GO:0070062">
    <property type="term" value="C:extracellular exosome"/>
    <property type="evidence" value="ECO:0007005"/>
    <property type="project" value="UniProtKB"/>
</dbReference>
<dbReference type="GO" id="GO:0005634">
    <property type="term" value="C:nucleus"/>
    <property type="evidence" value="ECO:0000305"/>
    <property type="project" value="UniProtKB"/>
</dbReference>
<dbReference type="GO" id="GO:0035497">
    <property type="term" value="F:cAMP response element binding"/>
    <property type="evidence" value="ECO:0000318"/>
    <property type="project" value="GO_Central"/>
</dbReference>
<dbReference type="GO" id="GO:0003700">
    <property type="term" value="F:DNA-binding transcription factor activity"/>
    <property type="evidence" value="ECO:0000314"/>
    <property type="project" value="UniProtKB"/>
</dbReference>
<dbReference type="GO" id="GO:0000981">
    <property type="term" value="F:DNA-binding transcription factor activity, RNA polymerase II-specific"/>
    <property type="evidence" value="ECO:0000247"/>
    <property type="project" value="NTNU_SB"/>
</dbReference>
<dbReference type="GO" id="GO:0042802">
    <property type="term" value="F:identical protein binding"/>
    <property type="evidence" value="ECO:0000353"/>
    <property type="project" value="IntAct"/>
</dbReference>
<dbReference type="GO" id="GO:1990837">
    <property type="term" value="F:sequence-specific double-stranded DNA binding"/>
    <property type="evidence" value="ECO:0000314"/>
    <property type="project" value="ARUK-UCL"/>
</dbReference>
<dbReference type="GO" id="GO:0008270">
    <property type="term" value="F:zinc ion binding"/>
    <property type="evidence" value="ECO:0007669"/>
    <property type="project" value="UniProtKB-KW"/>
</dbReference>
<dbReference type="GO" id="GO:0045893">
    <property type="term" value="P:positive regulation of DNA-templated transcription"/>
    <property type="evidence" value="ECO:0000314"/>
    <property type="project" value="UniProtKB"/>
</dbReference>
<dbReference type="GO" id="GO:0006357">
    <property type="term" value="P:regulation of transcription by RNA polymerase II"/>
    <property type="evidence" value="ECO:0000318"/>
    <property type="project" value="GO_Central"/>
</dbReference>
<dbReference type="CDD" id="cd14687">
    <property type="entry name" value="bZIP_ATF2"/>
    <property type="match status" value="1"/>
</dbReference>
<dbReference type="FunFam" id="1.20.5.170:FF:000010">
    <property type="entry name" value="Cyclic AMP-dependent transcription factor ATF-2"/>
    <property type="match status" value="1"/>
</dbReference>
<dbReference type="Gene3D" id="1.20.5.170">
    <property type="match status" value="1"/>
</dbReference>
<dbReference type="Gene3D" id="3.30.160.60">
    <property type="entry name" value="Classic Zinc Finger"/>
    <property type="match status" value="1"/>
</dbReference>
<dbReference type="InterPro" id="IPR004827">
    <property type="entry name" value="bZIP"/>
</dbReference>
<dbReference type="InterPro" id="IPR046347">
    <property type="entry name" value="bZIP_sf"/>
</dbReference>
<dbReference type="InterPro" id="IPR051027">
    <property type="entry name" value="bZIP_transcription_factors"/>
</dbReference>
<dbReference type="InterPro" id="IPR016378">
    <property type="entry name" value="TF_CRE-BP1-typ"/>
</dbReference>
<dbReference type="InterPro" id="IPR036236">
    <property type="entry name" value="Znf_C2H2_sf"/>
</dbReference>
<dbReference type="InterPro" id="IPR013087">
    <property type="entry name" value="Znf_C2H2_type"/>
</dbReference>
<dbReference type="PANTHER" id="PTHR19304">
    <property type="entry name" value="CYCLIC-AMP RESPONSE ELEMENT BINDING PROTEIN"/>
    <property type="match status" value="1"/>
</dbReference>
<dbReference type="Pfam" id="PF00170">
    <property type="entry name" value="bZIP_1"/>
    <property type="match status" value="1"/>
</dbReference>
<dbReference type="PIRSF" id="PIRSF003153">
    <property type="entry name" value="ATF2_CRE-BP1"/>
    <property type="match status" value="1"/>
</dbReference>
<dbReference type="SMART" id="SM00338">
    <property type="entry name" value="BRLZ"/>
    <property type="match status" value="1"/>
</dbReference>
<dbReference type="SUPFAM" id="SSF57667">
    <property type="entry name" value="beta-beta-alpha zinc fingers"/>
    <property type="match status" value="1"/>
</dbReference>
<dbReference type="SUPFAM" id="SSF57959">
    <property type="entry name" value="Leucine zipper domain"/>
    <property type="match status" value="1"/>
</dbReference>
<dbReference type="PROSITE" id="PS50217">
    <property type="entry name" value="BZIP"/>
    <property type="match status" value="1"/>
</dbReference>
<dbReference type="PROSITE" id="PS00036">
    <property type="entry name" value="BZIP_BASIC"/>
    <property type="match status" value="1"/>
</dbReference>
<dbReference type="PROSITE" id="PS00028">
    <property type="entry name" value="ZINC_FINGER_C2H2_1"/>
    <property type="match status" value="1"/>
</dbReference>
<dbReference type="PROSITE" id="PS50157">
    <property type="entry name" value="ZINC_FINGER_C2H2_2"/>
    <property type="match status" value="1"/>
</dbReference>
<organism>
    <name type="scientific">Homo sapiens</name>
    <name type="common">Human</name>
    <dbReference type="NCBI Taxonomy" id="9606"/>
    <lineage>
        <taxon>Eukaryota</taxon>
        <taxon>Metazoa</taxon>
        <taxon>Chordata</taxon>
        <taxon>Craniata</taxon>
        <taxon>Vertebrata</taxon>
        <taxon>Euteleostomi</taxon>
        <taxon>Mammalia</taxon>
        <taxon>Eutheria</taxon>
        <taxon>Euarchontoglires</taxon>
        <taxon>Primates</taxon>
        <taxon>Haplorrhini</taxon>
        <taxon>Catarrhini</taxon>
        <taxon>Hominidae</taxon>
        <taxon>Homo</taxon>
    </lineage>
</organism>
<comment type="function">
    <text evidence="4">Binds to the cAMP response element and activates transcription.</text>
</comment>
<comment type="subunit">
    <text evidence="5">Binds DNA as a homodimer or as a heterodimer with JUN or ATF2/CREBP1.</text>
</comment>
<comment type="interaction">
    <interactant intactId="EBI-10192698">
        <id>Q02930-3</id>
    </interactant>
    <interactant intactId="EBI-10173507">
        <id>Q6UY14-3</id>
        <label>ADAMTSL4</label>
    </interactant>
    <organismsDiffer>false</organismsDiffer>
    <experiments>6</experiments>
</comment>
<comment type="interaction">
    <interactant intactId="EBI-10192698">
        <id>Q02930-3</id>
    </interactant>
    <interactant intactId="EBI-949782">
        <id>Q96IF1</id>
        <label>AJUBA</label>
    </interactant>
    <organismsDiffer>false</organismsDiffer>
    <experiments>3</experiments>
</comment>
<comment type="interaction">
    <interactant intactId="EBI-10192698">
        <id>Q02930-3</id>
    </interactant>
    <interactant intactId="EBI-357530">
        <id>Q9ULX6</id>
        <label>AKAP8L</label>
    </interactant>
    <organismsDiffer>false</organismsDiffer>
    <experiments>3</experiments>
</comment>
<comment type="interaction">
    <interactant intactId="EBI-10192698">
        <id>Q02930-3</id>
    </interactant>
    <interactant intactId="EBI-1211484">
        <id>P05187</id>
        <label>ALPP</label>
    </interactant>
    <organismsDiffer>false</organismsDiffer>
    <experiments>3</experiments>
</comment>
<comment type="interaction">
    <interactant intactId="EBI-10192698">
        <id>Q02930-3</id>
    </interactant>
    <interactant intactId="EBI-12224467">
        <id>Q9NYG5-2</id>
        <label>ANAPC11</label>
    </interactant>
    <organismsDiffer>false</organismsDiffer>
    <experiments>3</experiments>
</comment>
<comment type="interaction">
    <interactant intactId="EBI-10192698">
        <id>Q02930-3</id>
    </interactant>
    <interactant intactId="EBI-946046">
        <id>P54252</id>
        <label>ATXN3</label>
    </interactant>
    <organismsDiffer>false</organismsDiffer>
    <experiments>3</experiments>
</comment>
<comment type="interaction">
    <interactant intactId="EBI-10192698">
        <id>Q02930-3</id>
    </interactant>
    <interactant intactId="EBI-10312707">
        <id>Q9NR55</id>
        <label>BATF3</label>
    </interactant>
    <organismsDiffer>false</organismsDiffer>
    <experiments>5</experiments>
</comment>
<comment type="interaction">
    <interactant intactId="EBI-10192698">
        <id>Q02930-3</id>
    </interactant>
    <interactant intactId="EBI-2802782">
        <id>Q6NVV7</id>
        <label>CDPF1</label>
    </interactant>
    <organismsDiffer>false</organismsDiffer>
    <experiments>3</experiments>
</comment>
<comment type="interaction">
    <interactant intactId="EBI-10192698">
        <id>Q02930-3</id>
    </interactant>
    <interactant intactId="EBI-12261896">
        <id>Q5T4B2</id>
        <label>CERCAM</label>
    </interactant>
    <organismsDiffer>false</organismsDiffer>
    <experiments>3</experiments>
</comment>
<comment type="interaction">
    <interactant intactId="EBI-10192698">
        <id>Q02930-3</id>
    </interactant>
    <interactant intactId="EBI-12868028">
        <id>A0PJX0</id>
        <label>CIB4</label>
    </interactant>
    <organismsDiffer>false</organismsDiffer>
    <experiments>3</experiments>
</comment>
<comment type="interaction">
    <interactant intactId="EBI-10192698">
        <id>Q02930-3</id>
    </interactant>
    <interactant intactId="EBI-12819063">
        <id>Q9BYD5</id>
        <label>CNFN</label>
    </interactant>
    <organismsDiffer>false</organismsDiffer>
    <experiments>3</experiments>
</comment>
<comment type="interaction">
    <interactant intactId="EBI-10192698">
        <id>Q02930-3</id>
    </interactant>
    <interactant intactId="EBI-747133">
        <id>P27658</id>
        <label>COL8A1</label>
    </interactant>
    <organismsDiffer>false</organismsDiffer>
    <experiments>6</experiments>
</comment>
<comment type="interaction">
    <interactant intactId="EBI-10192698">
        <id>Q02930-3</id>
    </interactant>
    <interactant intactId="EBI-10192698">
        <id>Q02930-3</id>
        <label>CREB5</label>
    </interactant>
    <organismsDiffer>false</organismsDiffer>
    <experiments>3</experiments>
</comment>
<comment type="interaction">
    <interactant intactId="EBI-10192698">
        <id>Q02930-3</id>
    </interactant>
    <interactant intactId="EBI-14156412">
        <id>Q08AG9</id>
        <label>CYP21A2</label>
    </interactant>
    <organismsDiffer>false</organismsDiffer>
    <experiments>3</experiments>
</comment>
<comment type="interaction">
    <interactant intactId="EBI-10192698">
        <id>Q02930-3</id>
    </interactant>
    <interactant intactId="EBI-3867333">
        <id>A8MQ03</id>
        <label>CYSRT1</label>
    </interactant>
    <organismsDiffer>false</organismsDiffer>
    <experiments>3</experiments>
</comment>
<comment type="interaction">
    <interactant intactId="EBI-10192698">
        <id>Q02930-3</id>
    </interactant>
    <interactant intactId="EBI-10976677">
        <id>G5E9A7</id>
        <label>DMWD</label>
    </interactant>
    <organismsDiffer>false</organismsDiffer>
    <experiments>3</experiments>
</comment>
<comment type="interaction">
    <interactant intactId="EBI-10192698">
        <id>Q02930-3</id>
    </interactant>
    <interactant intactId="EBI-743414">
        <id>O95967</id>
        <label>EFEMP2</label>
    </interactant>
    <organismsDiffer>false</organismsDiffer>
    <experiments>8</experiments>
</comment>
<comment type="interaction">
    <interactant intactId="EBI-10192698">
        <id>Q02930-3</id>
    </interactant>
    <interactant intactId="EBI-11956479">
        <id>P23142-4</id>
        <label>FBLN1</label>
    </interactant>
    <organismsDiffer>false</organismsDiffer>
    <experiments>3</experiments>
</comment>
<comment type="interaction">
    <interactant intactId="EBI-10192698">
        <id>Q02930-3</id>
    </interactant>
    <interactant intactId="EBI-741101">
        <id>Q13643</id>
        <label>FHL3</label>
    </interactant>
    <organismsDiffer>false</organismsDiffer>
    <experiments>3</experiments>
</comment>
<comment type="interaction">
    <interactant intactId="EBI-10192698">
        <id>Q02930-3</id>
    </interactant>
    <interactant intactId="EBI-852851">
        <id>P01100</id>
        <label>FOS</label>
    </interactant>
    <organismsDiffer>false</organismsDiffer>
    <experiments>3</experiments>
</comment>
<comment type="interaction">
    <interactant intactId="EBI-10192698">
        <id>Q02930-3</id>
    </interactant>
    <interactant intactId="EBI-10198738">
        <id>Q6FG41</id>
        <label>FOS</label>
    </interactant>
    <organismsDiffer>false</organismsDiffer>
    <experiments>3</experiments>
</comment>
<comment type="interaction">
    <interactant intactId="EBI-10192698">
        <id>Q02930-3</id>
    </interactant>
    <interactant intactId="EBI-2806743">
        <id>P53539</id>
        <label>FOSB</label>
    </interactant>
    <organismsDiffer>false</organismsDiffer>
    <experiments>3</experiments>
</comment>
<comment type="interaction">
    <interactant intactId="EBI-10192698">
        <id>Q02930-3</id>
    </interactant>
    <interactant intactId="EBI-744510">
        <id>P15407</id>
        <label>FOSL1</label>
    </interactant>
    <organismsDiffer>false</organismsDiffer>
    <experiments>6</experiments>
</comment>
<comment type="interaction">
    <interactant intactId="EBI-10192698">
        <id>Q02930-3</id>
    </interactant>
    <interactant intactId="EBI-3893419">
        <id>P15408</id>
        <label>FOSL2</label>
    </interactant>
    <organismsDiffer>false</organismsDiffer>
    <experiments>13</experiments>
</comment>
<comment type="interaction">
    <interactant intactId="EBI-10192698">
        <id>Q02930-3</id>
    </interactant>
    <interactant intactId="EBI-725515">
        <id>O43559</id>
        <label>FRS3</label>
    </interactant>
    <organismsDiffer>false</organismsDiffer>
    <experiments>3</experiments>
</comment>
<comment type="interaction">
    <interactant intactId="EBI-10192698">
        <id>Q02930-3</id>
    </interactant>
    <interactant intactId="EBI-1571188">
        <id>P19883</id>
        <label>FST</label>
    </interactant>
    <organismsDiffer>false</organismsDiffer>
    <experiments>5</experiments>
</comment>
<comment type="interaction">
    <interactant intactId="EBI-10192698">
        <id>Q02930-3</id>
    </interactant>
    <interactant intactId="EBI-15639515">
        <id>O15354</id>
        <label>GPR37</label>
    </interactant>
    <organismsDiffer>false</organismsDiffer>
    <experiments>3</experiments>
</comment>
<comment type="interaction">
    <interactant intactId="EBI-10192698">
        <id>Q02930-3</id>
    </interactant>
    <interactant intactId="EBI-747754">
        <id>P28799</id>
        <label>GRN</label>
    </interactant>
    <organismsDiffer>false</organismsDiffer>
    <experiments>3</experiments>
</comment>
<comment type="interaction">
    <interactant intactId="EBI-10192698">
        <id>Q02930-3</id>
    </interactant>
    <interactant intactId="EBI-25860013">
        <id>P28799-2</id>
        <label>GRN</label>
    </interactant>
    <organismsDiffer>false</organismsDiffer>
    <experiments>3</experiments>
</comment>
<comment type="interaction">
    <interactant intactId="EBI-10192698">
        <id>Q02930-3</id>
    </interactant>
    <interactant intactId="EBI-740785">
        <id>P49639</id>
        <label>HOXA1</label>
    </interactant>
    <organismsDiffer>false</organismsDiffer>
    <experiments>5</experiments>
</comment>
<comment type="interaction">
    <interactant intactId="EBI-10192698">
        <id>Q02930-3</id>
    </interactant>
    <interactant intactId="EBI-3918847">
        <id>Q9H2F3</id>
        <label>HSD3B7</label>
    </interactant>
    <organismsDiffer>false</organismsDiffer>
    <experiments>3</experiments>
</comment>
<comment type="interaction">
    <interactant intactId="EBI-10192698">
        <id>Q02930-3</id>
    </interactant>
    <interactant intactId="EBI-1387094">
        <id>Q02535</id>
        <label>ID3</label>
    </interactant>
    <organismsDiffer>false</organismsDiffer>
    <experiments>5</experiments>
</comment>
<comment type="interaction">
    <interactant intactId="EBI-10192698">
        <id>Q02930-3</id>
    </interactant>
    <interactant intactId="EBI-947015">
        <id>P24592</id>
        <label>IGFBP6</label>
    </interactant>
    <organismsDiffer>false</organismsDiffer>
    <experiments>3</experiments>
</comment>
<comment type="interaction">
    <interactant intactId="EBI-10192698">
        <id>Q02930-3</id>
    </interactant>
    <interactant intactId="EBI-748258">
        <id>Q5TA45</id>
        <label>INTS11</label>
    </interactant>
    <organismsDiffer>false</organismsDiffer>
    <experiments>3</experiments>
</comment>
<comment type="interaction">
    <interactant intactId="EBI-10192698">
        <id>Q02930-3</id>
    </interactant>
    <interactant intactId="EBI-1248415">
        <id>Q8WYK2</id>
        <label>JDP2</label>
    </interactant>
    <organismsDiffer>false</organismsDiffer>
    <experiments>3</experiments>
</comment>
<comment type="interaction">
    <interactant intactId="EBI-10192698">
        <id>Q02930-3</id>
    </interactant>
    <interactant intactId="EBI-2125614">
        <id>Q9BVG8</id>
        <label>KIFC3</label>
    </interactant>
    <organismsDiffer>false</organismsDiffer>
    <experiments>3</experiments>
</comment>
<comment type="interaction">
    <interactant intactId="EBI-10192698">
        <id>Q02930-3</id>
    </interactant>
    <interactant intactId="EBI-14069005">
        <id>Q9BVG8-5</id>
        <label>KIFC3</label>
    </interactant>
    <organismsDiffer>false</organismsDiffer>
    <experiments>3</experiments>
</comment>
<comment type="interaction">
    <interactant intactId="EBI-10192698">
        <id>Q02930-3</id>
    </interactant>
    <interactant intactId="EBI-10981970">
        <id>Q5T749</id>
        <label>KPRP</label>
    </interactant>
    <organismsDiffer>false</organismsDiffer>
    <experiments>5</experiments>
</comment>
<comment type="interaction">
    <interactant intactId="EBI-10192698">
        <id>Q02930-3</id>
    </interactant>
    <interactant intactId="EBI-739566">
        <id>P19012</id>
        <label>KRT15</label>
    </interactant>
    <organismsDiffer>false</organismsDiffer>
    <experiments>3</experiments>
</comment>
<comment type="interaction">
    <interactant intactId="EBI-10192698">
        <id>Q02930-3</id>
    </interactant>
    <interactant intactId="EBI-948001">
        <id>Q15323</id>
        <label>KRT31</label>
    </interactant>
    <organismsDiffer>false</organismsDiffer>
    <experiments>3</experiments>
</comment>
<comment type="interaction">
    <interactant intactId="EBI-10192698">
        <id>Q02930-3</id>
    </interactant>
    <interactant intactId="EBI-10171697">
        <id>Q6A162</id>
        <label>KRT40</label>
    </interactant>
    <organismsDiffer>false</organismsDiffer>
    <experiments>6</experiments>
</comment>
<comment type="interaction">
    <interactant intactId="EBI-10192698">
        <id>Q02930-3</id>
    </interactant>
    <interactant intactId="EBI-10221390">
        <id>P78385</id>
        <label>KRT83</label>
    </interactant>
    <organismsDiffer>false</organismsDiffer>
    <experiments>3</experiments>
</comment>
<comment type="interaction">
    <interactant intactId="EBI-10192698">
        <id>Q02930-3</id>
    </interactant>
    <interactant intactId="EBI-1049371">
        <id>P78386</id>
        <label>KRT85</label>
    </interactant>
    <organismsDiffer>false</organismsDiffer>
    <experiments>3</experiments>
</comment>
<comment type="interaction">
    <interactant intactId="EBI-10192698">
        <id>Q02930-3</id>
    </interactant>
    <interactant intactId="EBI-9996498">
        <id>O43790</id>
        <label>KRT86</label>
    </interactant>
    <organismsDiffer>false</organismsDiffer>
    <experiments>3</experiments>
</comment>
<comment type="interaction">
    <interactant intactId="EBI-10192698">
        <id>Q02930-3</id>
    </interactant>
    <interactant intactId="EBI-11749135">
        <id>Q8IUG1</id>
        <label>KRTAP1-3</label>
    </interactant>
    <organismsDiffer>false</organismsDiffer>
    <experiments>5</experiments>
</comment>
<comment type="interaction">
    <interactant intactId="EBI-10192698">
        <id>Q02930-3</id>
    </interactant>
    <interactant intactId="EBI-11741292">
        <id>Q9BYS1</id>
        <label>KRTAP1-5</label>
    </interactant>
    <organismsDiffer>false</organismsDiffer>
    <experiments>5</experiments>
</comment>
<comment type="interaction">
    <interactant intactId="EBI-10192698">
        <id>Q02930-3</id>
    </interactant>
    <interactant intactId="EBI-11955579">
        <id>P60014</id>
        <label>KRTAP10-10</label>
    </interactant>
    <organismsDiffer>false</organismsDiffer>
    <experiments>3</experiments>
</comment>
<comment type="interaction">
    <interactant intactId="EBI-10192698">
        <id>Q02930-3</id>
    </interactant>
    <interactant intactId="EBI-10217483">
        <id>P60412</id>
        <label>KRTAP10-11</label>
    </interactant>
    <organismsDiffer>false</organismsDiffer>
    <experiments>6</experiments>
</comment>
<comment type="interaction">
    <interactant intactId="EBI-10192698">
        <id>Q02930-3</id>
    </interactant>
    <interactant intactId="EBI-10172150">
        <id>P60370</id>
        <label>KRTAP10-5</label>
    </interactant>
    <organismsDiffer>false</organismsDiffer>
    <experiments>6</experiments>
</comment>
<comment type="interaction">
    <interactant intactId="EBI-10192698">
        <id>Q02930-3</id>
    </interactant>
    <interactant intactId="EBI-10172290">
        <id>P60409</id>
        <label>KRTAP10-7</label>
    </interactant>
    <organismsDiffer>false</organismsDiffer>
    <experiments>4</experiments>
</comment>
<comment type="interaction">
    <interactant intactId="EBI-10192698">
        <id>Q02930-3</id>
    </interactant>
    <interactant intactId="EBI-10171774">
        <id>P60410</id>
        <label>KRTAP10-8</label>
    </interactant>
    <organismsDiffer>false</organismsDiffer>
    <experiments>10</experiments>
</comment>
<comment type="interaction">
    <interactant intactId="EBI-10192698">
        <id>Q02930-3</id>
    </interactant>
    <interactant intactId="EBI-10172052">
        <id>P60411</id>
        <label>KRTAP10-9</label>
    </interactant>
    <organismsDiffer>false</organismsDiffer>
    <experiments>8</experiments>
</comment>
<comment type="interaction">
    <interactant intactId="EBI-10192698">
        <id>Q02930-3</id>
    </interactant>
    <interactant intactId="EBI-11953334">
        <id>P60328</id>
        <label>KRTAP12-3</label>
    </interactant>
    <organismsDiffer>false</organismsDiffer>
    <experiments>3</experiments>
</comment>
<comment type="interaction">
    <interactant intactId="EBI-10192698">
        <id>Q02930-3</id>
    </interactant>
    <interactant intactId="EBI-12196745">
        <id>Q3LHN2</id>
        <label>KRTAP19-2</label>
    </interactant>
    <organismsDiffer>false</organismsDiffer>
    <experiments>3</experiments>
</comment>
<comment type="interaction">
    <interactant intactId="EBI-10192698">
        <id>Q02930-3</id>
    </interactant>
    <interactant intactId="EBI-12020132">
        <id>Q7Z4W3</id>
        <label>KRTAP19-3</label>
    </interactant>
    <organismsDiffer>false</organismsDiffer>
    <experiments>3</experiments>
</comment>
<comment type="interaction">
    <interactant intactId="EBI-10192698">
        <id>Q02930-3</id>
    </interactant>
    <interactant intactId="EBI-1048945">
        <id>Q3LI72</id>
        <label>KRTAP19-5</label>
    </interactant>
    <organismsDiffer>false</organismsDiffer>
    <experiments>3</experiments>
</comment>
<comment type="interaction">
    <interactant intactId="EBI-10192698">
        <id>Q02930-3</id>
    </interactant>
    <interactant intactId="EBI-12805508">
        <id>Q3LI70</id>
        <label>KRTAP19-6</label>
    </interactant>
    <organismsDiffer>false</organismsDiffer>
    <experiments>3</experiments>
</comment>
<comment type="interaction">
    <interactant intactId="EBI-10192698">
        <id>Q02930-3</id>
    </interactant>
    <interactant intactId="EBI-14065470">
        <id>Q9BYR9</id>
        <label>KRTAP2-4</label>
    </interactant>
    <organismsDiffer>false</organismsDiffer>
    <experiments>3</experiments>
</comment>
<comment type="interaction">
    <interactant intactId="EBI-10192698">
        <id>Q02930-3</id>
    </interactant>
    <interactant intactId="EBI-9996449">
        <id>Q9BYR8</id>
        <label>KRTAP3-1</label>
    </interactant>
    <organismsDiffer>false</organismsDiffer>
    <experiments>3</experiments>
</comment>
<comment type="interaction">
    <interactant intactId="EBI-10192698">
        <id>Q02930-3</id>
    </interactant>
    <interactant intactId="EBI-751260">
        <id>Q9BYR7</id>
        <label>KRTAP3-2</label>
    </interactant>
    <organismsDiffer>false</organismsDiffer>
    <experiments>8</experiments>
</comment>
<comment type="interaction">
    <interactant intactId="EBI-10192698">
        <id>Q02930-3</id>
    </interactant>
    <interactant intactId="EBI-34579671">
        <id>Q9BYQ7</id>
        <label>KRTAP4-1</label>
    </interactant>
    <organismsDiffer>false</organismsDiffer>
    <experiments>3</experiments>
</comment>
<comment type="interaction">
    <interactant intactId="EBI-10192698">
        <id>Q02930-3</id>
    </interactant>
    <interactant intactId="EBI-739863">
        <id>Q9BQ66</id>
        <label>KRTAP4-12</label>
    </interactant>
    <organismsDiffer>false</organismsDiffer>
    <experiments>9</experiments>
</comment>
<comment type="interaction">
    <interactant intactId="EBI-10192698">
        <id>Q02930-3</id>
    </interactant>
    <interactant intactId="EBI-10172511">
        <id>Q9BYR5</id>
        <label>KRTAP4-2</label>
    </interactant>
    <organismsDiffer>false</organismsDiffer>
    <experiments>9</experiments>
</comment>
<comment type="interaction">
    <interactant intactId="EBI-10192698">
        <id>Q02930-3</id>
    </interactant>
    <interactant intactId="EBI-11958132">
        <id>Q9BYR3</id>
        <label>KRTAP4-4</label>
    </interactant>
    <organismsDiffer>false</organismsDiffer>
    <experiments>3</experiments>
</comment>
<comment type="interaction">
    <interactant intactId="EBI-10192698">
        <id>Q02930-3</id>
    </interactant>
    <interactant intactId="EBI-11993254">
        <id>Q9BYR2</id>
        <label>KRTAP4-5</label>
    </interactant>
    <organismsDiffer>false</organismsDiffer>
    <experiments>3</experiments>
</comment>
<comment type="interaction">
    <interactant intactId="EBI-10192698">
        <id>Q02930-3</id>
    </interactant>
    <interactant intactId="EBI-11993296">
        <id>Q6L8G4</id>
        <label>KRTAP5-11</label>
    </interactant>
    <organismsDiffer>false</organismsDiffer>
    <experiments>3</experiments>
</comment>
<comment type="interaction">
    <interactant intactId="EBI-10192698">
        <id>Q02930-3</id>
    </interactant>
    <interactant intactId="EBI-11958178">
        <id>Q701N4</id>
        <label>KRTAP5-2</label>
    </interactant>
    <organismsDiffer>false</organismsDiffer>
    <experiments>3</experiments>
</comment>
<comment type="interaction">
    <interactant intactId="EBI-10192698">
        <id>Q02930-3</id>
    </interactant>
    <interactant intactId="EBI-11963072">
        <id>Q6L8H1</id>
        <label>KRTAP5-4</label>
    </interactant>
    <organismsDiffer>false</organismsDiffer>
    <experiments>3</experiments>
</comment>
<comment type="interaction">
    <interactant intactId="EBI-10192698">
        <id>Q02930-3</id>
    </interactant>
    <interactant intactId="EBI-10250562">
        <id>Q6L8G9</id>
        <label>KRTAP5-6</label>
    </interactant>
    <organismsDiffer>false</organismsDiffer>
    <experiments>6</experiments>
</comment>
<comment type="interaction">
    <interactant intactId="EBI-10192698">
        <id>Q02930-3</id>
    </interactant>
    <interactant intactId="EBI-11987425">
        <id>Q6L8G8</id>
        <label>KRTAP5-7</label>
    </interactant>
    <organismsDiffer>false</organismsDiffer>
    <experiments>3</experiments>
</comment>
<comment type="interaction">
    <interactant intactId="EBI-10192698">
        <id>Q02930-3</id>
    </interactant>
    <interactant intactId="EBI-3958099">
        <id>P26371</id>
        <label>KRTAP5-9</label>
    </interactant>
    <organismsDiffer>false</organismsDiffer>
    <experiments>3</experiments>
</comment>
<comment type="interaction">
    <interactant intactId="EBI-10192698">
        <id>Q02930-3</id>
    </interactant>
    <interactant intactId="EBI-12111050">
        <id>Q3LI64</id>
        <label>KRTAP6-1</label>
    </interactant>
    <organismsDiffer>false</organismsDiffer>
    <experiments>5</experiments>
</comment>
<comment type="interaction">
    <interactant intactId="EBI-10192698">
        <id>Q02930-3</id>
    </interactant>
    <interactant intactId="EBI-11962084">
        <id>Q3LI66</id>
        <label>KRTAP6-2</label>
    </interactant>
    <organismsDiffer>false</organismsDiffer>
    <experiments>5</experiments>
</comment>
<comment type="interaction">
    <interactant intactId="EBI-10192698">
        <id>Q02930-3</id>
    </interactant>
    <interactant intactId="EBI-22311199">
        <id>Q3LI67</id>
        <label>KRTAP6-3</label>
    </interactant>
    <organismsDiffer>false</organismsDiffer>
    <experiments>3</experiments>
</comment>
<comment type="interaction">
    <interactant intactId="EBI-10192698">
        <id>Q02930-3</id>
    </interactant>
    <interactant intactId="EBI-18394498">
        <id>Q8IUC3</id>
        <label>KRTAP7-1</label>
    </interactant>
    <organismsDiffer>false</organismsDiffer>
    <experiments>3</experiments>
</comment>
<comment type="interaction">
    <interactant intactId="EBI-10192698">
        <id>Q02930-3</id>
    </interactant>
    <interactant intactId="EBI-10261141">
        <id>Q8IUC2</id>
        <label>KRTAP8-1</label>
    </interactant>
    <organismsDiffer>false</organismsDiffer>
    <experiments>3</experiments>
</comment>
<comment type="interaction">
    <interactant intactId="EBI-10192698">
        <id>Q02930-3</id>
    </interactant>
    <interactant intactId="EBI-1044640">
        <id>Q9BYQ4</id>
        <label>KRTAP9-2</label>
    </interactant>
    <organismsDiffer>false</organismsDiffer>
    <experiments>13</experiments>
</comment>
<comment type="interaction">
    <interactant intactId="EBI-10192698">
        <id>Q02930-3</id>
    </interactant>
    <interactant intactId="EBI-1043191">
        <id>Q9BYQ3</id>
        <label>KRTAP9-3</label>
    </interactant>
    <organismsDiffer>false</organismsDiffer>
    <experiments>3</experiments>
</comment>
<comment type="interaction">
    <interactant intactId="EBI-10192698">
        <id>Q02930-3</id>
    </interactant>
    <interactant intactId="EBI-10185730">
        <id>Q9BYQ2</id>
        <label>KRTAP9-4</label>
    </interactant>
    <organismsDiffer>false</organismsDiffer>
    <experiments>5</experiments>
</comment>
<comment type="interaction">
    <interactant intactId="EBI-10192698">
        <id>Q02930-3</id>
    </interactant>
    <interactant intactId="EBI-11958364">
        <id>Q9BYQ0</id>
        <label>KRTAP9-8</label>
    </interactant>
    <organismsDiffer>false</organismsDiffer>
    <experiments>5</experiments>
</comment>
<comment type="interaction">
    <interactant intactId="EBI-10192698">
        <id>Q02930-3</id>
    </interactant>
    <interactant intactId="EBI-12224199">
        <id>Q5T751</id>
        <label>LCE1C</label>
    </interactant>
    <organismsDiffer>false</organismsDiffer>
    <experiments>3</experiments>
</comment>
<comment type="interaction">
    <interactant intactId="EBI-10192698">
        <id>Q02930-3</id>
    </interactant>
    <interactant intactId="EBI-10246607">
        <id>Q5TA79</id>
        <label>LCE2A</label>
    </interactant>
    <organismsDiffer>false</organismsDiffer>
    <experiments>3</experiments>
</comment>
<comment type="interaction">
    <interactant intactId="EBI-10192698">
        <id>Q02930-3</id>
    </interactant>
    <interactant intactId="EBI-11973993">
        <id>Q5TA81</id>
        <label>LCE2C</label>
    </interactant>
    <organismsDiffer>false</organismsDiffer>
    <experiments>3</experiments>
</comment>
<comment type="interaction">
    <interactant intactId="EBI-10192698">
        <id>Q02930-3</id>
    </interactant>
    <interactant intactId="EBI-10246358">
        <id>Q5TA78</id>
        <label>LCE4A</label>
    </interactant>
    <organismsDiffer>false</organismsDiffer>
    <experiments>3</experiments>
</comment>
<comment type="interaction">
    <interactant intactId="EBI-10192698">
        <id>Q02930-3</id>
    </interactant>
    <interactant intactId="EBI-11955689">
        <id>Q5TCM9</id>
        <label>LCE5A</label>
    </interactant>
    <organismsDiffer>false</organismsDiffer>
    <experiments>3</experiments>
</comment>
<comment type="interaction">
    <interactant intactId="EBI-10192698">
        <id>Q02930-3</id>
    </interactant>
    <interactant intactId="EBI-3957707">
        <id>Q9UHV8</id>
        <label>LGALS13</label>
    </interactant>
    <organismsDiffer>false</organismsDiffer>
    <experiments>3</experiments>
</comment>
<comment type="interaction">
    <interactant intactId="EBI-10192698">
        <id>Q02930-3</id>
    </interactant>
    <interactant intactId="EBI-725647">
        <id>Q99732</id>
        <label>LITAF</label>
    </interactant>
    <organismsDiffer>false</organismsDiffer>
    <experiments>3</experiments>
</comment>
<comment type="interaction">
    <interactant intactId="EBI-10192698">
        <id>Q02930-3</id>
    </interactant>
    <interactant intactId="EBI-10258690">
        <id>O60663-2</id>
        <label>LMX1B</label>
    </interactant>
    <organismsDiffer>false</organismsDiffer>
    <experiments>3</experiments>
</comment>
<comment type="interaction">
    <interactant intactId="EBI-10192698">
        <id>Q02930-3</id>
    </interactant>
    <interactant intactId="EBI-724076">
        <id>Q99750</id>
        <label>MDFI</label>
    </interactant>
    <organismsDiffer>false</organismsDiffer>
    <experiments>8</experiments>
</comment>
<comment type="interaction">
    <interactant intactId="EBI-10192698">
        <id>Q02930-3</id>
    </interactant>
    <interactant intactId="EBI-740216">
        <id>P55198</id>
        <label>MLLT6</label>
    </interactant>
    <organismsDiffer>false</organismsDiffer>
    <experiments>3</experiments>
</comment>
<comment type="interaction">
    <interactant intactId="EBI-10192698">
        <id>Q02930-3</id>
    </interactant>
    <interactant intactId="EBI-11111575">
        <id>Q9H3L0</id>
        <label>MMADHC</label>
    </interactant>
    <organismsDiffer>false</organismsDiffer>
    <experiments>5</experiments>
</comment>
<comment type="interaction">
    <interactant intactId="EBI-10192698">
        <id>Q02930-3</id>
    </interactant>
    <interactant intactId="EBI-742948">
        <id>Q5JR59</id>
        <label>MTUS2</label>
    </interactant>
    <organismsDiffer>false</organismsDiffer>
    <experiments>3</experiments>
</comment>
<comment type="interaction">
    <interactant intactId="EBI-10192698">
        <id>Q02930-3</id>
    </interactant>
    <interactant intactId="EBI-748610">
        <id>Q6IA69</id>
        <label>NADSYN1</label>
    </interactant>
    <organismsDiffer>false</organismsDiffer>
    <experiments>3</experiments>
</comment>
<comment type="interaction">
    <interactant intactId="EBI-10192698">
        <id>Q02930-3</id>
    </interactant>
    <interactant intactId="EBI-945833">
        <id>Q7Z3S9</id>
        <label>NOTCH2NLA</label>
    </interactant>
    <organismsDiffer>false</organismsDiffer>
    <experiments>3</experiments>
</comment>
<comment type="interaction">
    <interactant intactId="EBI-10192698">
        <id>Q02930-3</id>
    </interactant>
    <interactant intactId="EBI-22310682">
        <id>P0DPK4</id>
        <label>NOTCH2NLC</label>
    </interactant>
    <organismsDiffer>false</organismsDiffer>
    <experiments>3</experiments>
</comment>
<comment type="interaction">
    <interactant intactId="EBI-10192698">
        <id>Q02930-3</id>
    </interactant>
    <interactant intactId="EBI-11956269">
        <id>Q92824-2</id>
        <label>PCSK5</label>
    </interactant>
    <organismsDiffer>false</organismsDiffer>
    <experiments>6</experiments>
</comment>
<comment type="interaction">
    <interactant intactId="EBI-10192698">
        <id>Q02930-3</id>
    </interactant>
    <interactant intactId="EBI-726466">
        <id>O15496</id>
        <label>PLA2G10</label>
    </interactant>
    <organismsDiffer>false</organismsDiffer>
    <experiments>3</experiments>
</comment>
<comment type="interaction">
    <interactant intactId="EBI-10192698">
        <id>Q02930-3</id>
    </interactant>
    <interactant intactId="EBI-3957793">
        <id>Q9GZV8</id>
        <label>PRDM14</label>
    </interactant>
    <organismsDiffer>false</organismsDiffer>
    <experiments>3</experiments>
</comment>
<comment type="interaction">
    <interactant intactId="EBI-10192698">
        <id>Q02930-3</id>
    </interactant>
    <interactant intactId="EBI-2340624">
        <id>Q9BYM8</id>
        <label>RBCK1</label>
    </interactant>
    <organismsDiffer>false</organismsDiffer>
    <experiments>3</experiments>
</comment>
<comment type="interaction">
    <interactant intactId="EBI-10192698">
        <id>Q02930-3</id>
    </interactant>
    <interactant intactId="EBI-12806054">
        <id>P10745</id>
        <label>RBP3</label>
    </interactant>
    <organismsDiffer>false</organismsDiffer>
    <experiments>3</experiments>
</comment>
<comment type="interaction">
    <interactant intactId="EBI-10192698">
        <id>Q02930-3</id>
    </interactant>
    <interactant intactId="EBI-740322">
        <id>Q93062</id>
        <label>RBPMS</label>
    </interactant>
    <organismsDiffer>false</organismsDiffer>
    <experiments>3</experiments>
</comment>
<comment type="interaction">
    <interactant intactId="EBI-10192698">
        <id>Q02930-3</id>
    </interactant>
    <interactant intactId="EBI-740343">
        <id>Q93062-3</id>
        <label>RBPMS</label>
    </interactant>
    <organismsDiffer>false</organismsDiffer>
    <experiments>3</experiments>
</comment>
<comment type="interaction">
    <interactant intactId="EBI-10192698">
        <id>Q02930-3</id>
    </interactant>
    <interactant intactId="EBI-947779">
        <id>Q96PM5</id>
        <label>RCHY1</label>
    </interactant>
    <organismsDiffer>false</organismsDiffer>
    <experiments>3</experiments>
</comment>
<comment type="interaction">
    <interactant intactId="EBI-10192698">
        <id>Q02930-3</id>
    </interactant>
    <interactant intactId="EBI-3918154">
        <id>Q9UGC6</id>
        <label>RGS17</label>
    </interactant>
    <organismsDiffer>false</organismsDiffer>
    <experiments>3</experiments>
</comment>
<comment type="interaction">
    <interactant intactId="EBI-10192698">
        <id>Q02930-3</id>
    </interactant>
    <interactant intactId="EBI-1052678">
        <id>O76081</id>
        <label>RGS20</label>
    </interactant>
    <organismsDiffer>false</organismsDiffer>
    <experiments>3</experiments>
</comment>
<comment type="interaction">
    <interactant intactId="EBI-10192698">
        <id>Q02930-3</id>
    </interactant>
    <interactant intactId="EBI-10178530">
        <id>O76081-6</id>
        <label>RGS20</label>
    </interactant>
    <organismsDiffer>false</organismsDiffer>
    <experiments>6</experiments>
</comment>
<comment type="interaction">
    <interactant intactId="EBI-10192698">
        <id>Q02930-3</id>
    </interactant>
    <interactant intactId="EBI-10182375">
        <id>Q9UFD9</id>
        <label>RIMBP3</label>
    </interactant>
    <organismsDiffer>false</organismsDiffer>
    <experiments>3</experiments>
</comment>
<comment type="interaction">
    <interactant intactId="EBI-10192698">
        <id>Q02930-3</id>
    </interactant>
    <interactant intactId="EBI-751555">
        <id>Q9H0X6</id>
        <label>RNF208</label>
    </interactant>
    <organismsDiffer>false</organismsDiffer>
    <experiments>3</experiments>
</comment>
<comment type="interaction">
    <interactant intactId="EBI-10192698">
        <id>Q02930-3</id>
    </interactant>
    <interactant intactId="EBI-12372219">
        <id>O15304-2</id>
        <label>SIVA1</label>
    </interactant>
    <organismsDiffer>false</organismsDiffer>
    <experiments>3</experiments>
</comment>
<comment type="interaction">
    <interactant intactId="EBI-10192698">
        <id>Q02930-3</id>
    </interactant>
    <interactant intactId="EBI-12004298">
        <id>O75971-2</id>
        <label>SNAPC5</label>
    </interactant>
    <organismsDiffer>false</organismsDiffer>
    <experiments>3</experiments>
</comment>
<comment type="interaction">
    <interactant intactId="EBI-10192698">
        <id>Q02930-3</id>
    </interactant>
    <interactant intactId="EBI-10696971">
        <id>Q7Z6I5</id>
        <label>SPATA12</label>
    </interactant>
    <organismsDiffer>false</organismsDiffer>
    <experiments>3</experiments>
</comment>
<comment type="interaction">
    <interactant intactId="EBI-10192698">
        <id>Q02930-3</id>
    </interactant>
    <interactant intactId="EBI-2822161">
        <id>Q6IQ16</id>
        <label>SPOPL</label>
    </interactant>
    <organismsDiffer>false</organismsDiffer>
    <experiments>3</experiments>
</comment>
<comment type="interaction">
    <interactant intactId="EBI-10192698">
        <id>Q02930-3</id>
    </interactant>
    <interactant intactId="EBI-5235340">
        <id>Q7Z699</id>
        <label>SPRED1</label>
    </interactant>
    <organismsDiffer>false</organismsDiffer>
    <experiments>6</experiments>
</comment>
<comment type="interaction">
    <interactant intactId="EBI-10192698">
        <id>Q02930-3</id>
    </interactant>
    <interactant intactId="EBI-3866665">
        <id>O43609</id>
        <label>SPRY1</label>
    </interactant>
    <organismsDiffer>false</organismsDiffer>
    <experiments>8</experiments>
</comment>
<comment type="interaction">
    <interactant intactId="EBI-10192698">
        <id>Q02930-3</id>
    </interactant>
    <interactant intactId="EBI-742487">
        <id>O43597</id>
        <label>SPRY2</label>
    </interactant>
    <organismsDiffer>false</organismsDiffer>
    <experiments>3</experiments>
</comment>
<comment type="interaction">
    <interactant intactId="EBI-10192698">
        <id>Q02930-3</id>
    </interactant>
    <interactant intactId="EBI-12290641">
        <id>O43610</id>
        <label>SPRY3</label>
    </interactant>
    <organismsDiffer>false</organismsDiffer>
    <experiments>3</experiments>
</comment>
<comment type="interaction">
    <interactant intactId="EBI-10192698">
        <id>Q02930-3</id>
    </interactant>
    <interactant intactId="EBI-354861">
        <id>Q9C004</id>
        <label>SPRY4</label>
    </interactant>
    <organismsDiffer>false</organismsDiffer>
    <experiments>3</experiments>
</comment>
<comment type="interaction">
    <interactant intactId="EBI-10192698">
        <id>Q02930-3</id>
    </interactant>
    <interactant intactId="EBI-396540">
        <id>Q12888</id>
        <label>TP53BP1</label>
    </interactant>
    <organismsDiffer>false</organismsDiffer>
    <experiments>3</experiments>
</comment>
<comment type="interaction">
    <interactant intactId="EBI-10192698">
        <id>Q02930-3</id>
    </interactant>
    <interactant intactId="EBI-355744">
        <id>Q12933</id>
        <label>TRAF2</label>
    </interactant>
    <organismsDiffer>false</organismsDiffer>
    <experiments>6</experiments>
</comment>
<comment type="interaction">
    <interactant intactId="EBI-10192698">
        <id>Q02930-3</id>
    </interactant>
    <interactant intactId="EBI-740098">
        <id>P36406</id>
        <label>TRIM23</label>
    </interactant>
    <organismsDiffer>false</organismsDiffer>
    <experiments>3</experiments>
</comment>
<comment type="interaction">
    <interactant intactId="EBI-10192698">
        <id>Q02930-3</id>
    </interactant>
    <interactant intactId="EBI-719493">
        <id>P14373</id>
        <label>TRIM27</label>
    </interactant>
    <organismsDiffer>false</organismsDiffer>
    <experiments>3</experiments>
</comment>
<comment type="interaction">
    <interactant intactId="EBI-10192698">
        <id>Q02930-3</id>
    </interactant>
    <interactant intactId="EBI-5235829">
        <id>Q8IWZ5</id>
        <label>TRIM42</label>
    </interactant>
    <organismsDiffer>false</organismsDiffer>
    <experiments>6</experiments>
</comment>
<comment type="interaction">
    <interactant intactId="EBI-10192698">
        <id>Q02930-3</id>
    </interactant>
    <interactant intactId="EBI-742327">
        <id>Q15654</id>
        <label>TRIP6</label>
    </interactant>
    <organismsDiffer>false</organismsDiffer>
    <experiments>3</experiments>
</comment>
<comment type="interaction">
    <interactant intactId="EBI-10192698">
        <id>Q02930-3</id>
    </interactant>
    <interactant intactId="EBI-744794">
        <id>Q9BZW7</id>
        <label>TSGA10</label>
    </interactant>
    <organismsDiffer>false</organismsDiffer>
    <experiments>3</experiments>
</comment>
<comment type="interaction">
    <interactant intactId="EBI-10192698">
        <id>Q02930-3</id>
    </interactant>
    <interactant intactId="EBI-8652667">
        <id>O14817</id>
        <label>TSPAN4</label>
    </interactant>
    <organismsDiffer>false</organismsDiffer>
    <experiments>3</experiments>
</comment>
<comment type="interaction">
    <interactant intactId="EBI-10192698">
        <id>Q02930-3</id>
    </interactant>
    <interactant intactId="EBI-746981">
        <id>Q969E8</id>
        <label>TSR2</label>
    </interactant>
    <organismsDiffer>false</organismsDiffer>
    <experiments>3</experiments>
</comment>
<comment type="interaction">
    <interactant intactId="EBI-10192698">
        <id>Q02930-3</id>
    </interactant>
    <interactant intactId="EBI-12068150">
        <id>Q6NVU6</id>
        <label>UFSP1</label>
    </interactant>
    <organismsDiffer>false</organismsDiffer>
    <experiments>3</experiments>
</comment>
<comment type="interaction">
    <interactant intactId="EBI-10192698">
        <id>Q02930-3</id>
    </interactant>
    <interactant intactId="EBI-12817837">
        <id>Q9H9P5-5</id>
        <label>UNKL</label>
    </interactant>
    <organismsDiffer>false</organismsDiffer>
    <experiments>3</experiments>
</comment>
<comment type="interaction">
    <interactant intactId="EBI-10192698">
        <id>Q02930-3</id>
    </interactant>
    <interactant intactId="EBI-12040603">
        <id>Q9NZC7-5</id>
        <label>WWOX</label>
    </interactant>
    <organismsDiffer>false</organismsDiffer>
    <experiments>3</experiments>
</comment>
<comment type="interaction">
    <interactant intactId="EBI-10192698">
        <id>Q02930-3</id>
    </interactant>
    <interactant intactId="EBI-7850213">
        <id>Q9UDW3</id>
        <label>ZMAT5</label>
    </interactant>
    <organismsDiffer>false</organismsDiffer>
    <experiments>3</experiments>
</comment>
<comment type="interaction">
    <interactant intactId="EBI-10192698">
        <id>Q02930-3</id>
    </interactant>
    <interactant intactId="EBI-373456">
        <id>Q9Y3S2</id>
        <label>ZNF330</label>
    </interactant>
    <organismsDiffer>false</organismsDiffer>
    <experiments>3</experiments>
</comment>
<comment type="subcellular location">
    <subcellularLocation>
        <location evidence="9">Nucleus</location>
    </subcellularLocation>
</comment>
<comment type="alternative products">
    <event type="alternative splicing"/>
    <isoform>
        <id>Q02930-1</id>
        <name>1</name>
        <name>Alpha</name>
        <sequence type="displayed"/>
    </isoform>
    <isoform>
        <id>Q02930-2</id>
        <name>2</name>
        <name>Beta</name>
        <sequence type="described" ref="VSP_050010"/>
    </isoform>
    <isoform>
        <id>Q02930-3</id>
        <name>3</name>
        <name>Gamma</name>
        <sequence type="described" ref="VSP_050011"/>
    </isoform>
    <isoform>
        <id>Q02930-4</id>
        <name>4</name>
        <name>Delta</name>
        <sequence type="described" ref="VSP_050012 VSP_050013"/>
    </isoform>
</comment>
<comment type="similarity">
    <text evidence="9">Belongs to the bZIP family.</text>
</comment>
<accession>Q02930</accession>
<accession>A8KA51</accession>
<accession>B4DU13</accession>
<accession>B5BUH3</accession>
<accession>C9JK47</accession>
<accession>Q05886</accession>
<accession>Q06246</accession>
<accession>Q75N02</accession>
<accession>Q86UJ9</accession>
<feature type="chain" id="PRO_0000076604" description="Cyclic AMP-responsive element-binding protein 5">
    <location>
        <begin position="1"/>
        <end position="508"/>
    </location>
</feature>
<feature type="domain" description="bZIP" evidence="2">
    <location>
        <begin position="375"/>
        <end position="438"/>
    </location>
</feature>
<feature type="zinc finger region" description="C2H2-type" evidence="1">
    <location>
        <begin position="16"/>
        <end position="40"/>
    </location>
</feature>
<feature type="region of interest" description="Disordered" evidence="3">
    <location>
        <begin position="265"/>
        <end position="391"/>
    </location>
</feature>
<feature type="region of interest" description="Basic motif" evidence="2">
    <location>
        <begin position="377"/>
        <end position="397"/>
    </location>
</feature>
<feature type="region of interest" description="Leucine-zipper" evidence="2">
    <location>
        <begin position="403"/>
        <end position="431"/>
    </location>
</feature>
<feature type="region of interest" description="Disordered" evidence="3">
    <location>
        <begin position="449"/>
        <end position="468"/>
    </location>
</feature>
<feature type="compositionally biased region" description="Basic residues" evidence="3">
    <location>
        <begin position="271"/>
        <end position="280"/>
    </location>
</feature>
<feature type="compositionally biased region" description="Basic residues" evidence="3">
    <location>
        <begin position="289"/>
        <end position="326"/>
    </location>
</feature>
<feature type="compositionally biased region" description="Polar residues" evidence="3">
    <location>
        <begin position="337"/>
        <end position="346"/>
    </location>
</feature>
<feature type="compositionally biased region" description="Low complexity" evidence="3">
    <location>
        <begin position="347"/>
        <end position="357"/>
    </location>
</feature>
<feature type="compositionally biased region" description="Basic and acidic residues" evidence="3">
    <location>
        <begin position="369"/>
        <end position="386"/>
    </location>
</feature>
<feature type="modified residue" description="Phosphothreonine" evidence="10">
    <location>
        <position position="59"/>
    </location>
</feature>
<feature type="modified residue" description="Phosphothreonine" evidence="10">
    <location>
        <position position="61"/>
    </location>
</feature>
<feature type="modified residue" description="Phosphoserine" evidence="10">
    <location>
        <position position="137"/>
    </location>
</feature>
<feature type="cross-link" description="Glycyl lysine isopeptide (Lys-Gly) (interchain with G-Cter in SUMO2)" evidence="11">
    <location>
        <position position="50"/>
    </location>
</feature>
<feature type="splice variant" id="VSP_050011" description="In isoform 3." evidence="6 8">
    <location>
        <begin position="1"/>
        <end position="33"/>
    </location>
</feature>
<feature type="splice variant" id="VSP_050012" description="In isoform 4." evidence="6 7 8">
    <original>MIYEESKMNLEQERPF</original>
    <variation>MFCTSGGNSASVMSMR</variation>
    <location>
        <begin position="1"/>
        <end position="16"/>
    </location>
</feature>
<feature type="splice variant" id="VSP_050010" description="In isoform 2." evidence="8">
    <location>
        <begin position="1"/>
        <end position="7"/>
    </location>
</feature>
<feature type="splice variant" id="VSP_050013" description="In isoform 4." evidence="6 7 8">
    <location>
        <begin position="17"/>
        <end position="155"/>
    </location>
</feature>
<feature type="sequence conflict" description="In Ref. 1; AAA52072 and 2; AAC37525." evidence="9" ref="1 2">
    <original>F</original>
    <variation>S</variation>
    <location>
        <position position="16"/>
    </location>
</feature>
<feature type="sequence conflict" description="In Ref. 1; AAA52072 and 2; AAC37525/AAC37526/AAC37527." evidence="9" ref="1 2">
    <original>MQ</original>
    <variation>IE</variation>
    <location>
        <begin position="211"/>
        <end position="212"/>
    </location>
</feature>
<protein>
    <recommendedName>
        <fullName>Cyclic AMP-responsive element-binding protein 5</fullName>
        <shortName>CREB-5</shortName>
        <shortName>cAMP-responsive element-binding protein 5</shortName>
    </recommendedName>
    <alternativeName>
        <fullName>cAMP-response element-binding protein A</fullName>
        <shortName>CRE-BPa</shortName>
    </alternativeName>
</protein>
<keyword id="KW-0010">Activator</keyword>
<keyword id="KW-0025">Alternative splicing</keyword>
<keyword id="KW-0238">DNA-binding</keyword>
<keyword id="KW-1017">Isopeptide bond</keyword>
<keyword id="KW-0479">Metal-binding</keyword>
<keyword id="KW-0539">Nucleus</keyword>
<keyword id="KW-0597">Phosphoprotein</keyword>
<keyword id="KW-1267">Proteomics identification</keyword>
<keyword id="KW-1185">Reference proteome</keyword>
<keyword id="KW-0804">Transcription</keyword>
<keyword id="KW-0805">Transcription regulation</keyword>
<keyword id="KW-0832">Ubl conjugation</keyword>
<keyword id="KW-0862">Zinc</keyword>
<keyword id="KW-0863">Zinc-finger</keyword>
<name>CREB5_HUMAN</name>
<gene>
    <name type="primary">CREB5</name>
    <name type="synonym">CREBPA</name>
</gene>
<proteinExistence type="evidence at protein level"/>